<evidence type="ECO:0000255" key="1"/>
<evidence type="ECO:0000305" key="2"/>
<accession>Q84JN1</accession>
<accession>Q0WL78</accession>
<accession>Q8LGB3</accession>
<accession>Q9FK58</accession>
<reference key="1">
    <citation type="journal article" date="1998" name="DNA Res.">
        <title>Structural analysis of Arabidopsis thaliana chromosome 5. VI. Sequence features of the regions of 1,367,185 bp covered by 19 physically assigned P1 and TAC clones.</title>
        <authorList>
            <person name="Kotani H."/>
            <person name="Nakamura Y."/>
            <person name="Sato S."/>
            <person name="Asamizu E."/>
            <person name="Kaneko T."/>
            <person name="Miyajima N."/>
            <person name="Tabata S."/>
        </authorList>
    </citation>
    <scope>NUCLEOTIDE SEQUENCE [LARGE SCALE GENOMIC DNA]</scope>
    <source>
        <strain>cv. Columbia</strain>
    </source>
</reference>
<reference key="2">
    <citation type="journal article" date="2017" name="Plant J.">
        <title>Araport11: a complete reannotation of the Arabidopsis thaliana reference genome.</title>
        <authorList>
            <person name="Cheng C.Y."/>
            <person name="Krishnakumar V."/>
            <person name="Chan A.P."/>
            <person name="Thibaud-Nissen F."/>
            <person name="Schobel S."/>
            <person name="Town C.D."/>
        </authorList>
    </citation>
    <scope>GENOME REANNOTATION</scope>
    <source>
        <strain>cv. Columbia</strain>
    </source>
</reference>
<reference key="3">
    <citation type="journal article" date="2003" name="Science">
        <title>Empirical analysis of transcriptional activity in the Arabidopsis genome.</title>
        <authorList>
            <person name="Yamada K."/>
            <person name="Lim J."/>
            <person name="Dale J.M."/>
            <person name="Chen H."/>
            <person name="Shinn P."/>
            <person name="Palm C.J."/>
            <person name="Southwick A.M."/>
            <person name="Wu H.C."/>
            <person name="Kim C.J."/>
            <person name="Nguyen M."/>
            <person name="Pham P.K."/>
            <person name="Cheuk R.F."/>
            <person name="Karlin-Newmann G."/>
            <person name="Liu S.X."/>
            <person name="Lam B."/>
            <person name="Sakano H."/>
            <person name="Wu T."/>
            <person name="Yu G."/>
            <person name="Miranda M."/>
            <person name="Quach H.L."/>
            <person name="Tripp M."/>
            <person name="Chang C.H."/>
            <person name="Lee J.M."/>
            <person name="Toriumi M.J."/>
            <person name="Chan M.M."/>
            <person name="Tang C.C."/>
            <person name="Onodera C.S."/>
            <person name="Deng J.M."/>
            <person name="Akiyama K."/>
            <person name="Ansari Y."/>
            <person name="Arakawa T."/>
            <person name="Banh J."/>
            <person name="Banno F."/>
            <person name="Bowser L."/>
            <person name="Brooks S.Y."/>
            <person name="Carninci P."/>
            <person name="Chao Q."/>
            <person name="Choy N."/>
            <person name="Enju A."/>
            <person name="Goldsmith A.D."/>
            <person name="Gurjal M."/>
            <person name="Hansen N.F."/>
            <person name="Hayashizaki Y."/>
            <person name="Johnson-Hopson C."/>
            <person name="Hsuan V.W."/>
            <person name="Iida K."/>
            <person name="Karnes M."/>
            <person name="Khan S."/>
            <person name="Koesema E."/>
            <person name="Ishida J."/>
            <person name="Jiang P.X."/>
            <person name="Jones T."/>
            <person name="Kawai J."/>
            <person name="Kamiya A."/>
            <person name="Meyers C."/>
            <person name="Nakajima M."/>
            <person name="Narusaka M."/>
            <person name="Seki M."/>
            <person name="Sakurai T."/>
            <person name="Satou M."/>
            <person name="Tamse R."/>
            <person name="Vaysberg M."/>
            <person name="Wallender E.K."/>
            <person name="Wong C."/>
            <person name="Yamamura Y."/>
            <person name="Yuan S."/>
            <person name="Shinozaki K."/>
            <person name="Davis R.W."/>
            <person name="Theologis A."/>
            <person name="Ecker J.R."/>
        </authorList>
    </citation>
    <scope>NUCLEOTIDE SEQUENCE [LARGE SCALE MRNA]</scope>
    <source>
        <strain>cv. Columbia</strain>
    </source>
</reference>
<reference key="4">
    <citation type="submission" date="2002-03" db="EMBL/GenBank/DDBJ databases">
        <title>Full-length cDNA from Arabidopsis thaliana.</title>
        <authorList>
            <person name="Brover V.V."/>
            <person name="Troukhan M.E."/>
            <person name="Alexandrov N.A."/>
            <person name="Lu Y.-P."/>
            <person name="Flavell R.B."/>
            <person name="Feldmann K.A."/>
        </authorList>
    </citation>
    <scope>NUCLEOTIDE SEQUENCE [LARGE SCALE MRNA]</scope>
</reference>
<reference key="5">
    <citation type="submission" date="2006-07" db="EMBL/GenBank/DDBJ databases">
        <title>Large-scale analysis of RIKEN Arabidopsis full-length (RAFL) cDNAs.</title>
        <authorList>
            <person name="Totoki Y."/>
            <person name="Seki M."/>
            <person name="Ishida J."/>
            <person name="Nakajima M."/>
            <person name="Enju A."/>
            <person name="Kamiya A."/>
            <person name="Narusaka M."/>
            <person name="Shin-i T."/>
            <person name="Nakagawa M."/>
            <person name="Sakamoto N."/>
            <person name="Oishi K."/>
            <person name="Kohara Y."/>
            <person name="Kobayashi M."/>
            <person name="Toyoda A."/>
            <person name="Sakaki Y."/>
            <person name="Sakurai T."/>
            <person name="Iida K."/>
            <person name="Akiyama K."/>
            <person name="Satou M."/>
            <person name="Toyoda T."/>
            <person name="Konagaya A."/>
            <person name="Carninci P."/>
            <person name="Kawai J."/>
            <person name="Hayashizaki Y."/>
            <person name="Shinozaki K."/>
        </authorList>
    </citation>
    <scope>NUCLEOTIDE SEQUENCE [LARGE SCALE MRNA] OF 227-289</scope>
    <source>
        <strain>cv. Columbia</strain>
    </source>
</reference>
<gene>
    <name type="primary">APRL7</name>
    <name type="ordered locus">At5g18120</name>
    <name type="ORF">MRG7.8</name>
</gene>
<feature type="signal peptide" evidence="1">
    <location>
        <begin position="1"/>
        <end position="23"/>
    </location>
</feature>
<feature type="chain" id="PRO_0000400044" description="5'-adenylylsulfate reductase-like 7">
    <location>
        <begin position="24"/>
        <end position="289"/>
    </location>
</feature>
<feature type="transmembrane region" description="Helical" evidence="1">
    <location>
        <begin position="198"/>
        <end position="218"/>
    </location>
</feature>
<feature type="domain" description="Thioredoxin">
    <location>
        <begin position="37"/>
        <end position="157"/>
    </location>
</feature>
<feature type="glycosylation site" description="N-linked (GlcNAc...) asparagine" evidence="1">
    <location>
        <position position="132"/>
    </location>
</feature>
<feature type="glycosylation site" description="N-linked (GlcNAc...) asparagine" evidence="1">
    <location>
        <position position="184"/>
    </location>
</feature>
<feature type="sequence conflict" description="In Ref. 4; AAM60945." evidence="2" ref="4">
    <original>V</original>
    <variation>L</variation>
    <location>
        <position position="199"/>
    </location>
</feature>
<sequence length="289" mass="32614">MNLWVSIFLVSAIAGSCLPSGFAYVDVCNHEFEVFRSVIEQKCPRSLYPSPPIEVDGDLLDKLMDANHGNAYISILFYTSRCPFSRAVRPKFDVLSSMFPHITHLIVEQSQALPSVFSRYGIHSLPSILMVNQTMKMRYHGPKDLASLIQFYKETTGLKPVQYMDEGEPTSLDTDGNLITWLHNGSSIREIAEREPYMVLALMFLSLKLAILIFPIMGSRLKTLWALYVPHLSLGILGETSQLFGRALHMIDVRRLWIKLRLTKTRNFQERAKNALASVSLGKSSSQSA</sequence>
<proteinExistence type="evidence at transcript level"/>
<dbReference type="EMBL" id="AB012246">
    <property type="protein sequence ID" value="BAB09470.1"/>
    <property type="status" value="ALT_SEQ"/>
    <property type="molecule type" value="Genomic_DNA"/>
</dbReference>
<dbReference type="EMBL" id="CP002688">
    <property type="protein sequence ID" value="AED92509.1"/>
    <property type="molecule type" value="Genomic_DNA"/>
</dbReference>
<dbReference type="EMBL" id="BT002852">
    <property type="protein sequence ID" value="AAO22670.1"/>
    <property type="molecule type" value="mRNA"/>
</dbReference>
<dbReference type="EMBL" id="BT004434">
    <property type="protein sequence ID" value="AAO42428.1"/>
    <property type="molecule type" value="mRNA"/>
</dbReference>
<dbReference type="EMBL" id="AY084364">
    <property type="protein sequence ID" value="AAM60945.1"/>
    <property type="molecule type" value="mRNA"/>
</dbReference>
<dbReference type="EMBL" id="AK230330">
    <property type="protein sequence ID" value="BAF02129.1"/>
    <property type="molecule type" value="mRNA"/>
</dbReference>
<dbReference type="RefSeq" id="NP_568360.1">
    <property type="nucleotide sequence ID" value="NM_121817.4"/>
</dbReference>
<dbReference type="SMR" id="Q84JN1"/>
<dbReference type="FunCoup" id="Q84JN1">
    <property type="interactions" value="1485"/>
</dbReference>
<dbReference type="GlyCosmos" id="Q84JN1">
    <property type="glycosylation" value="2 sites, No reported glycans"/>
</dbReference>
<dbReference type="GlyGen" id="Q84JN1">
    <property type="glycosylation" value="2 sites"/>
</dbReference>
<dbReference type="PaxDb" id="3702-AT5G18120.1"/>
<dbReference type="ProteomicsDB" id="244963"/>
<dbReference type="EnsemblPlants" id="AT5G18120.1">
    <property type="protein sequence ID" value="AT5G18120.1"/>
    <property type="gene ID" value="AT5G18120"/>
</dbReference>
<dbReference type="GeneID" id="831930"/>
<dbReference type="Gramene" id="AT5G18120.1">
    <property type="protein sequence ID" value="AT5G18120.1"/>
    <property type="gene ID" value="AT5G18120"/>
</dbReference>
<dbReference type="KEGG" id="ath:AT5G18120"/>
<dbReference type="Araport" id="AT5G18120"/>
<dbReference type="TAIR" id="AT5G18120">
    <property type="gene designation" value="APRL7"/>
</dbReference>
<dbReference type="eggNOG" id="KOG2640">
    <property type="taxonomic scope" value="Eukaryota"/>
</dbReference>
<dbReference type="HOGENOM" id="CLU_051582_1_0_1"/>
<dbReference type="InParanoid" id="Q84JN1"/>
<dbReference type="PhylomeDB" id="Q84JN1"/>
<dbReference type="PRO" id="PR:Q84JN1"/>
<dbReference type="Proteomes" id="UP000006548">
    <property type="component" value="Chromosome 5"/>
</dbReference>
<dbReference type="ExpressionAtlas" id="Q84JN1">
    <property type="expression patterns" value="baseline and differential"/>
</dbReference>
<dbReference type="GO" id="GO:0016020">
    <property type="term" value="C:membrane"/>
    <property type="evidence" value="ECO:0007669"/>
    <property type="project" value="UniProtKB-SubCell"/>
</dbReference>
<dbReference type="CDD" id="cd02999">
    <property type="entry name" value="PDI_a_ERp44_like"/>
    <property type="match status" value="1"/>
</dbReference>
<dbReference type="Gene3D" id="3.40.30.10">
    <property type="entry name" value="Glutaredoxin"/>
    <property type="match status" value="1"/>
</dbReference>
<dbReference type="InterPro" id="IPR044794">
    <property type="entry name" value="APRL5/7"/>
</dbReference>
<dbReference type="InterPro" id="IPR036249">
    <property type="entry name" value="Thioredoxin-like_sf"/>
</dbReference>
<dbReference type="PANTHER" id="PTHR47126">
    <property type="entry name" value="5'-ADENYLYLSULFATE REDUCTASE-LIKE 7"/>
    <property type="match status" value="1"/>
</dbReference>
<dbReference type="PANTHER" id="PTHR47126:SF10">
    <property type="entry name" value="5'-ADENYLYLSULFATE REDUCTASE-LIKE 7"/>
    <property type="match status" value="1"/>
</dbReference>
<dbReference type="SUPFAM" id="SSF52833">
    <property type="entry name" value="Thioredoxin-like"/>
    <property type="match status" value="1"/>
</dbReference>
<protein>
    <recommendedName>
        <fullName>5'-adenylylsulfate reductase-like 7</fullName>
    </recommendedName>
    <alternativeName>
        <fullName>Adenosine 5'-phosphosulfate reductase-like 7</fullName>
        <shortName>APR-like 7</shortName>
        <shortName>AtAPRL7</shortName>
    </alternativeName>
</protein>
<name>APRL7_ARATH</name>
<comment type="subcellular location">
    <subcellularLocation>
        <location evidence="2">Membrane</location>
        <topology evidence="2">Single-pass membrane protein</topology>
    </subcellularLocation>
</comment>
<comment type="sequence caution" evidence="2">
    <conflict type="erroneous gene model prediction">
        <sequence resource="EMBL-CDS" id="BAB09470"/>
    </conflict>
</comment>
<keyword id="KW-0325">Glycoprotein</keyword>
<keyword id="KW-0472">Membrane</keyword>
<keyword id="KW-1185">Reference proteome</keyword>
<keyword id="KW-0732">Signal</keyword>
<keyword id="KW-0812">Transmembrane</keyword>
<keyword id="KW-1133">Transmembrane helix</keyword>
<organism>
    <name type="scientific">Arabidopsis thaliana</name>
    <name type="common">Mouse-ear cress</name>
    <dbReference type="NCBI Taxonomy" id="3702"/>
    <lineage>
        <taxon>Eukaryota</taxon>
        <taxon>Viridiplantae</taxon>
        <taxon>Streptophyta</taxon>
        <taxon>Embryophyta</taxon>
        <taxon>Tracheophyta</taxon>
        <taxon>Spermatophyta</taxon>
        <taxon>Magnoliopsida</taxon>
        <taxon>eudicotyledons</taxon>
        <taxon>Gunneridae</taxon>
        <taxon>Pentapetalae</taxon>
        <taxon>rosids</taxon>
        <taxon>malvids</taxon>
        <taxon>Brassicales</taxon>
        <taxon>Brassicaceae</taxon>
        <taxon>Camelineae</taxon>
        <taxon>Arabidopsis</taxon>
    </lineage>
</organism>